<proteinExistence type="inferred from homology"/>
<feature type="signal peptide" description="Tat-type signal" evidence="1">
    <location>
        <begin position="1"/>
        <end position="44"/>
    </location>
</feature>
<feature type="chain" id="PRO_1000085520" description="Protein-methionine-sulfoxide reductase catalytic subunit MsrP" evidence="1">
    <location>
        <begin position="45"/>
        <end position="306"/>
    </location>
</feature>
<feature type="binding site" evidence="1">
    <location>
        <position position="69"/>
    </location>
    <ligand>
        <name>Mo-molybdopterin</name>
        <dbReference type="ChEBI" id="CHEBI:71302"/>
    </ligand>
</feature>
<feature type="binding site" evidence="1">
    <location>
        <begin position="72"/>
        <end position="73"/>
    </location>
    <ligand>
        <name>Mo-molybdopterin</name>
        <dbReference type="ChEBI" id="CHEBI:71302"/>
    </ligand>
</feature>
<feature type="binding site" evidence="1">
    <location>
        <position position="127"/>
    </location>
    <ligand>
        <name>Mo-molybdopterin</name>
        <dbReference type="ChEBI" id="CHEBI:71302"/>
    </ligand>
    <ligandPart>
        <name>Mo</name>
        <dbReference type="ChEBI" id="CHEBI:28685"/>
    </ligandPart>
</feature>
<feature type="binding site" evidence="1">
    <location>
        <position position="162"/>
    </location>
    <ligand>
        <name>Mo-molybdopterin</name>
        <dbReference type="ChEBI" id="CHEBI:71302"/>
    </ligand>
</feature>
<feature type="binding site" evidence="1">
    <location>
        <position position="210"/>
    </location>
    <ligand>
        <name>Mo-molybdopterin</name>
        <dbReference type="ChEBI" id="CHEBI:71302"/>
    </ligand>
</feature>
<feature type="binding site" evidence="1">
    <location>
        <position position="215"/>
    </location>
    <ligand>
        <name>Mo-molybdopterin</name>
        <dbReference type="ChEBI" id="CHEBI:71302"/>
    </ligand>
</feature>
<feature type="binding site" evidence="1">
    <location>
        <begin position="226"/>
        <end position="228"/>
    </location>
    <ligand>
        <name>Mo-molybdopterin</name>
        <dbReference type="ChEBI" id="CHEBI:71302"/>
    </ligand>
</feature>
<organism>
    <name type="scientific">Caulobacter sp. (strain K31)</name>
    <dbReference type="NCBI Taxonomy" id="366602"/>
    <lineage>
        <taxon>Bacteria</taxon>
        <taxon>Pseudomonadati</taxon>
        <taxon>Pseudomonadota</taxon>
        <taxon>Alphaproteobacteria</taxon>
        <taxon>Caulobacterales</taxon>
        <taxon>Caulobacteraceae</taxon>
        <taxon>Caulobacter</taxon>
    </lineage>
</organism>
<comment type="function">
    <text evidence="1">Part of the MsrPQ system that repairs oxidized periplasmic proteins containing methionine sulfoxide residues (Met-O), using respiratory chain electrons. Thus protects these proteins from oxidative-stress damage caused by reactive species of oxygen and chlorine generated by the host defense mechanisms. MsrPQ is essential for the maintenance of envelope integrity under bleach stress, rescuing a wide series of structurally unrelated periplasmic proteins from methionine oxidation. The catalytic subunit MsrP is non-stereospecific, being able to reduce both (R-) and (S-) diastereoisomers of methionine sulfoxide.</text>
</comment>
<comment type="catalytic activity">
    <reaction evidence="1">
        <text>L-methionyl-[protein] + a quinone + H2O = L-methionyl-(S)-S-oxide-[protein] + a quinol</text>
        <dbReference type="Rhea" id="RHEA:51292"/>
        <dbReference type="Rhea" id="RHEA-COMP:12313"/>
        <dbReference type="Rhea" id="RHEA-COMP:12315"/>
        <dbReference type="ChEBI" id="CHEBI:15377"/>
        <dbReference type="ChEBI" id="CHEBI:16044"/>
        <dbReference type="ChEBI" id="CHEBI:24646"/>
        <dbReference type="ChEBI" id="CHEBI:44120"/>
        <dbReference type="ChEBI" id="CHEBI:132124"/>
    </reaction>
</comment>
<comment type="catalytic activity">
    <reaction evidence="1">
        <text>L-methionyl-[protein] + a quinone + H2O = L-methionyl-(R)-S-oxide-[protein] + a quinol</text>
        <dbReference type="Rhea" id="RHEA:51296"/>
        <dbReference type="Rhea" id="RHEA-COMP:12313"/>
        <dbReference type="Rhea" id="RHEA-COMP:12314"/>
        <dbReference type="ChEBI" id="CHEBI:15377"/>
        <dbReference type="ChEBI" id="CHEBI:16044"/>
        <dbReference type="ChEBI" id="CHEBI:24646"/>
        <dbReference type="ChEBI" id="CHEBI:45764"/>
        <dbReference type="ChEBI" id="CHEBI:132124"/>
    </reaction>
</comment>
<comment type="cofactor">
    <cofactor evidence="1">
        <name>Mo-molybdopterin</name>
        <dbReference type="ChEBI" id="CHEBI:71302"/>
    </cofactor>
    <text evidence="1">Binds 1 Mo-molybdopterin (Mo-MPT) cofactor per subunit.</text>
</comment>
<comment type="subunit">
    <text evidence="1">Heterodimer of a catalytic subunit (MsrP) and a heme-binding subunit (MsrQ).</text>
</comment>
<comment type="subcellular location">
    <subcellularLocation>
        <location evidence="1">Periplasm</location>
    </subcellularLocation>
    <text evidence="1">Is attached to the inner membrane when interacting with the MsrQ subunit.</text>
</comment>
<comment type="PTM">
    <text evidence="1">Predicted to be exported by the Tat system. The position of the signal peptide cleavage has not been experimentally proven.</text>
</comment>
<comment type="similarity">
    <text evidence="1">Belongs to the MsrP family.</text>
</comment>
<sequence>MLIRHAPDLTDNDVTGHGLYLRRRDFIGGAAGLGLMAAAGSASARGLTYGPGFSTTEAPTPKKDITSYNNFYEFGVNKEDPSENAGSLKTRPWTVRVDGECEKPATFAIDDLIKGNKLEERIYRMRCVEGWSMVIPWVGFPLKDLIAQVKPTSKAKFVAFETLMRPSEMPGQRWDTLQWPYREGLRIDEAVHPLAILAVGLYGDVLPNQNGAPLRLVVPWKYGFKGIKSIVRISLVETMPATAWNVLAPREYGFYSNVNPAVDHPRWSQATERRIGEFRRRETLPFNGYGQYVADLYRGMDLKRNF</sequence>
<protein>
    <recommendedName>
        <fullName evidence="1">Protein-methionine-sulfoxide reductase catalytic subunit MsrP</fullName>
        <ecNumber evidence="1">1.8.5.-</ecNumber>
    </recommendedName>
</protein>
<reference key="1">
    <citation type="submission" date="2008-01" db="EMBL/GenBank/DDBJ databases">
        <title>Complete sequence of chromosome of Caulobacter sp. K31.</title>
        <authorList>
            <consortium name="US DOE Joint Genome Institute"/>
            <person name="Copeland A."/>
            <person name="Lucas S."/>
            <person name="Lapidus A."/>
            <person name="Barry K."/>
            <person name="Glavina del Rio T."/>
            <person name="Dalin E."/>
            <person name="Tice H."/>
            <person name="Pitluck S."/>
            <person name="Bruce D."/>
            <person name="Goodwin L."/>
            <person name="Thompson L.S."/>
            <person name="Brettin T."/>
            <person name="Detter J.C."/>
            <person name="Han C."/>
            <person name="Schmutz J."/>
            <person name="Larimer F."/>
            <person name="Land M."/>
            <person name="Hauser L."/>
            <person name="Kyrpides N."/>
            <person name="Kim E."/>
            <person name="Stephens C."/>
            <person name="Richardson P."/>
        </authorList>
    </citation>
    <scope>NUCLEOTIDE SEQUENCE [LARGE SCALE GENOMIC DNA]</scope>
    <source>
        <strain>K31</strain>
    </source>
</reference>
<keyword id="KW-0479">Metal-binding</keyword>
<keyword id="KW-0500">Molybdenum</keyword>
<keyword id="KW-0560">Oxidoreductase</keyword>
<keyword id="KW-0574">Periplasm</keyword>
<keyword id="KW-0732">Signal</keyword>
<name>MSRP_CAUSK</name>
<accession>B0SVB3</accession>
<dbReference type="EC" id="1.8.5.-" evidence="1"/>
<dbReference type="EMBL" id="CP000927">
    <property type="protein sequence ID" value="ABZ73003.1"/>
    <property type="molecule type" value="Genomic_DNA"/>
</dbReference>
<dbReference type="SMR" id="B0SVB3"/>
<dbReference type="STRING" id="366602.Caul_3877"/>
<dbReference type="KEGG" id="cak:Caul_3877"/>
<dbReference type="eggNOG" id="COG2041">
    <property type="taxonomic scope" value="Bacteria"/>
</dbReference>
<dbReference type="HOGENOM" id="CLU_045520_0_0_5"/>
<dbReference type="OrthoDB" id="9795587at2"/>
<dbReference type="GO" id="GO:0042597">
    <property type="term" value="C:periplasmic space"/>
    <property type="evidence" value="ECO:0007669"/>
    <property type="project" value="UniProtKB-SubCell"/>
</dbReference>
<dbReference type="GO" id="GO:0046872">
    <property type="term" value="F:metal ion binding"/>
    <property type="evidence" value="ECO:0007669"/>
    <property type="project" value="UniProtKB-KW"/>
</dbReference>
<dbReference type="GO" id="GO:0043546">
    <property type="term" value="F:molybdopterin cofactor binding"/>
    <property type="evidence" value="ECO:0007669"/>
    <property type="project" value="UniProtKB-UniRule"/>
</dbReference>
<dbReference type="GO" id="GO:0016672">
    <property type="term" value="F:oxidoreductase activity, acting on a sulfur group of donors, quinone or similar compound as acceptor"/>
    <property type="evidence" value="ECO:0007669"/>
    <property type="project" value="UniProtKB-UniRule"/>
</dbReference>
<dbReference type="GO" id="GO:0030091">
    <property type="term" value="P:protein repair"/>
    <property type="evidence" value="ECO:0007669"/>
    <property type="project" value="UniProtKB-UniRule"/>
</dbReference>
<dbReference type="Gene3D" id="3.90.420.10">
    <property type="entry name" value="Oxidoreductase, molybdopterin-binding domain"/>
    <property type="match status" value="1"/>
</dbReference>
<dbReference type="HAMAP" id="MF_01206">
    <property type="entry name" value="MsrP"/>
    <property type="match status" value="1"/>
</dbReference>
<dbReference type="InterPro" id="IPR022867">
    <property type="entry name" value="MsrP"/>
</dbReference>
<dbReference type="InterPro" id="IPR000572">
    <property type="entry name" value="OxRdtase_Mopterin-bd_dom"/>
</dbReference>
<dbReference type="InterPro" id="IPR036374">
    <property type="entry name" value="OxRdtase_Mopterin-bd_sf"/>
</dbReference>
<dbReference type="InterPro" id="IPR006311">
    <property type="entry name" value="TAT_signal"/>
</dbReference>
<dbReference type="NCBIfam" id="NF003767">
    <property type="entry name" value="PRK05363.1"/>
    <property type="match status" value="1"/>
</dbReference>
<dbReference type="PANTHER" id="PTHR43032">
    <property type="entry name" value="PROTEIN-METHIONINE-SULFOXIDE REDUCTASE"/>
    <property type="match status" value="1"/>
</dbReference>
<dbReference type="PANTHER" id="PTHR43032:SF3">
    <property type="entry name" value="PROTEIN-METHIONINE-SULFOXIDE REDUCTASE CATALYTIC SUBUNIT MSRP"/>
    <property type="match status" value="1"/>
</dbReference>
<dbReference type="Pfam" id="PF00174">
    <property type="entry name" value="Oxidored_molyb"/>
    <property type="match status" value="1"/>
</dbReference>
<dbReference type="SUPFAM" id="SSF56524">
    <property type="entry name" value="Oxidoreductase molybdopterin-binding domain"/>
    <property type="match status" value="1"/>
</dbReference>
<dbReference type="PROSITE" id="PS51318">
    <property type="entry name" value="TAT"/>
    <property type="match status" value="1"/>
</dbReference>
<gene>
    <name evidence="1" type="primary">msrP</name>
    <name type="ordered locus">Caul_3877</name>
</gene>
<evidence type="ECO:0000255" key="1">
    <source>
        <dbReference type="HAMAP-Rule" id="MF_01206"/>
    </source>
</evidence>